<gene>
    <name evidence="1" type="primary">hldE</name>
    <name type="synonym">rfaE</name>
    <name type="ordered locus">STY3379</name>
    <name type="ordered locus">t3120</name>
</gene>
<proteinExistence type="inferred from homology"/>
<name>HLDE_SALTI</name>
<keyword id="KW-0067">ATP-binding</keyword>
<keyword id="KW-0119">Carbohydrate metabolism</keyword>
<keyword id="KW-0418">Kinase</keyword>
<keyword id="KW-0448">Lipopolysaccharide biosynthesis</keyword>
<keyword id="KW-0511">Multifunctional enzyme</keyword>
<keyword id="KW-0547">Nucleotide-binding</keyword>
<keyword id="KW-0548">Nucleotidyltransferase</keyword>
<keyword id="KW-0808">Transferase</keyword>
<protein>
    <recommendedName>
        <fullName evidence="1">Bifunctional protein HldE</fullName>
    </recommendedName>
    <domain>
        <recommendedName>
            <fullName evidence="1">D-beta-D-heptose 7-phosphate kinase</fullName>
            <ecNumber evidence="1">2.7.1.167</ecNumber>
        </recommendedName>
        <alternativeName>
            <fullName evidence="1">D-beta-D-heptose 7-phosphotransferase</fullName>
        </alternativeName>
        <alternativeName>
            <fullName evidence="1">D-glycero-beta-D-manno-heptose-7-phosphate kinase</fullName>
        </alternativeName>
    </domain>
    <domain>
        <recommendedName>
            <fullName evidence="1">D-beta-D-heptose 1-phosphate adenylyltransferase</fullName>
            <ecNumber evidence="1">2.7.7.70</ecNumber>
        </recommendedName>
        <alternativeName>
            <fullName evidence="1">D-glycero-beta-D-manno-heptose 1-phosphate adenylyltransferase</fullName>
        </alternativeName>
    </domain>
</protein>
<dbReference type="EC" id="2.7.1.167" evidence="1"/>
<dbReference type="EC" id="2.7.7.70" evidence="1"/>
<dbReference type="EMBL" id="AL513382">
    <property type="protein sequence ID" value="CAD07725.1"/>
    <property type="molecule type" value="Genomic_DNA"/>
</dbReference>
<dbReference type="EMBL" id="AE014613">
    <property type="protein sequence ID" value="AAO70663.1"/>
    <property type="molecule type" value="Genomic_DNA"/>
</dbReference>
<dbReference type="RefSeq" id="NP_457591.1">
    <property type="nucleotide sequence ID" value="NC_003198.1"/>
</dbReference>
<dbReference type="RefSeq" id="WP_000867682.1">
    <property type="nucleotide sequence ID" value="NZ_WSUR01000003.1"/>
</dbReference>
<dbReference type="SMR" id="Q8XEW9"/>
<dbReference type="STRING" id="220341.gene:17587234"/>
<dbReference type="KEGG" id="stt:t3120"/>
<dbReference type="KEGG" id="sty:STY3379"/>
<dbReference type="PATRIC" id="fig|220341.7.peg.3440"/>
<dbReference type="eggNOG" id="COG0615">
    <property type="taxonomic scope" value="Bacteria"/>
</dbReference>
<dbReference type="eggNOG" id="COG2870">
    <property type="taxonomic scope" value="Bacteria"/>
</dbReference>
<dbReference type="HOGENOM" id="CLU_021150_2_1_6"/>
<dbReference type="OMA" id="ILNQTHP"/>
<dbReference type="OrthoDB" id="9802794at2"/>
<dbReference type="UniPathway" id="UPA00356">
    <property type="reaction ID" value="UER00437"/>
</dbReference>
<dbReference type="UniPathway" id="UPA00356">
    <property type="reaction ID" value="UER00439"/>
</dbReference>
<dbReference type="UniPathway" id="UPA00958"/>
<dbReference type="Proteomes" id="UP000000541">
    <property type="component" value="Chromosome"/>
</dbReference>
<dbReference type="Proteomes" id="UP000002670">
    <property type="component" value="Chromosome"/>
</dbReference>
<dbReference type="GO" id="GO:0005829">
    <property type="term" value="C:cytosol"/>
    <property type="evidence" value="ECO:0007669"/>
    <property type="project" value="TreeGrafter"/>
</dbReference>
<dbReference type="GO" id="GO:0005524">
    <property type="term" value="F:ATP binding"/>
    <property type="evidence" value="ECO:0007669"/>
    <property type="project" value="UniProtKB-UniRule"/>
</dbReference>
<dbReference type="GO" id="GO:0033785">
    <property type="term" value="F:heptose 7-phosphate kinase activity"/>
    <property type="evidence" value="ECO:0007669"/>
    <property type="project" value="UniProtKB-UniRule"/>
</dbReference>
<dbReference type="GO" id="GO:0033786">
    <property type="term" value="F:heptose-1-phosphate adenylyltransferase activity"/>
    <property type="evidence" value="ECO:0007669"/>
    <property type="project" value="UniProtKB-UniRule"/>
</dbReference>
<dbReference type="GO" id="GO:0016773">
    <property type="term" value="F:phosphotransferase activity, alcohol group as acceptor"/>
    <property type="evidence" value="ECO:0007669"/>
    <property type="project" value="InterPro"/>
</dbReference>
<dbReference type="GO" id="GO:0097171">
    <property type="term" value="P:ADP-L-glycero-beta-D-manno-heptose biosynthetic process"/>
    <property type="evidence" value="ECO:0007669"/>
    <property type="project" value="UniProtKB-UniPathway"/>
</dbReference>
<dbReference type="GO" id="GO:0009244">
    <property type="term" value="P:lipopolysaccharide core region biosynthetic process"/>
    <property type="evidence" value="ECO:0007669"/>
    <property type="project" value="UniProtKB-UniPathway"/>
</dbReference>
<dbReference type="CDD" id="cd01172">
    <property type="entry name" value="RfaE_like"/>
    <property type="match status" value="1"/>
</dbReference>
<dbReference type="FunFam" id="3.40.1190.20:FF:000002">
    <property type="entry name" value="Bifunctional protein HldE"/>
    <property type="match status" value="1"/>
</dbReference>
<dbReference type="FunFam" id="3.40.50.620:FF:000028">
    <property type="entry name" value="Bifunctional protein HldE"/>
    <property type="match status" value="1"/>
</dbReference>
<dbReference type="Gene3D" id="3.40.1190.20">
    <property type="match status" value="1"/>
</dbReference>
<dbReference type="Gene3D" id="3.40.50.620">
    <property type="entry name" value="HUPs"/>
    <property type="match status" value="1"/>
</dbReference>
<dbReference type="HAMAP" id="MF_01603">
    <property type="entry name" value="HldE"/>
    <property type="match status" value="1"/>
</dbReference>
<dbReference type="InterPro" id="IPR023030">
    <property type="entry name" value="Bifunc_HldE"/>
</dbReference>
<dbReference type="InterPro" id="IPR002173">
    <property type="entry name" value="Carboh/pur_kinase_PfkB_CS"/>
</dbReference>
<dbReference type="InterPro" id="IPR004821">
    <property type="entry name" value="Cyt_trans-like"/>
</dbReference>
<dbReference type="InterPro" id="IPR011611">
    <property type="entry name" value="PfkB_dom"/>
</dbReference>
<dbReference type="InterPro" id="IPR011913">
    <property type="entry name" value="RfaE_dom_I"/>
</dbReference>
<dbReference type="InterPro" id="IPR011914">
    <property type="entry name" value="RfaE_dom_II"/>
</dbReference>
<dbReference type="InterPro" id="IPR029056">
    <property type="entry name" value="Ribokinase-like"/>
</dbReference>
<dbReference type="InterPro" id="IPR014729">
    <property type="entry name" value="Rossmann-like_a/b/a_fold"/>
</dbReference>
<dbReference type="NCBIfam" id="TIGR00125">
    <property type="entry name" value="cyt_tran_rel"/>
    <property type="match status" value="1"/>
</dbReference>
<dbReference type="NCBIfam" id="NF008454">
    <property type="entry name" value="PRK11316.1"/>
    <property type="match status" value="1"/>
</dbReference>
<dbReference type="NCBIfam" id="TIGR02198">
    <property type="entry name" value="rfaE_dom_I"/>
    <property type="match status" value="1"/>
</dbReference>
<dbReference type="NCBIfam" id="TIGR02199">
    <property type="entry name" value="rfaE_dom_II"/>
    <property type="match status" value="1"/>
</dbReference>
<dbReference type="PANTHER" id="PTHR46969">
    <property type="entry name" value="BIFUNCTIONAL PROTEIN HLDE"/>
    <property type="match status" value="1"/>
</dbReference>
<dbReference type="PANTHER" id="PTHR46969:SF1">
    <property type="entry name" value="BIFUNCTIONAL PROTEIN HLDE"/>
    <property type="match status" value="1"/>
</dbReference>
<dbReference type="Pfam" id="PF01467">
    <property type="entry name" value="CTP_transf_like"/>
    <property type="match status" value="1"/>
</dbReference>
<dbReference type="Pfam" id="PF00294">
    <property type="entry name" value="PfkB"/>
    <property type="match status" value="1"/>
</dbReference>
<dbReference type="SUPFAM" id="SSF52374">
    <property type="entry name" value="Nucleotidylyl transferase"/>
    <property type="match status" value="1"/>
</dbReference>
<dbReference type="SUPFAM" id="SSF53613">
    <property type="entry name" value="Ribokinase-like"/>
    <property type="match status" value="1"/>
</dbReference>
<dbReference type="PROSITE" id="PS00583">
    <property type="entry name" value="PFKB_KINASES_1"/>
    <property type="match status" value="1"/>
</dbReference>
<reference key="1">
    <citation type="journal article" date="2001" name="Nature">
        <title>Complete genome sequence of a multiple drug resistant Salmonella enterica serovar Typhi CT18.</title>
        <authorList>
            <person name="Parkhill J."/>
            <person name="Dougan G."/>
            <person name="James K.D."/>
            <person name="Thomson N.R."/>
            <person name="Pickard D."/>
            <person name="Wain J."/>
            <person name="Churcher C.M."/>
            <person name="Mungall K.L."/>
            <person name="Bentley S.D."/>
            <person name="Holden M.T.G."/>
            <person name="Sebaihia M."/>
            <person name="Baker S."/>
            <person name="Basham D."/>
            <person name="Brooks K."/>
            <person name="Chillingworth T."/>
            <person name="Connerton P."/>
            <person name="Cronin A."/>
            <person name="Davis P."/>
            <person name="Davies R.M."/>
            <person name="Dowd L."/>
            <person name="White N."/>
            <person name="Farrar J."/>
            <person name="Feltwell T."/>
            <person name="Hamlin N."/>
            <person name="Haque A."/>
            <person name="Hien T.T."/>
            <person name="Holroyd S."/>
            <person name="Jagels K."/>
            <person name="Krogh A."/>
            <person name="Larsen T.S."/>
            <person name="Leather S."/>
            <person name="Moule S."/>
            <person name="O'Gaora P."/>
            <person name="Parry C."/>
            <person name="Quail M.A."/>
            <person name="Rutherford K.M."/>
            <person name="Simmonds M."/>
            <person name="Skelton J."/>
            <person name="Stevens K."/>
            <person name="Whitehead S."/>
            <person name="Barrell B.G."/>
        </authorList>
    </citation>
    <scope>NUCLEOTIDE SEQUENCE [LARGE SCALE GENOMIC DNA]</scope>
    <source>
        <strain>CT18</strain>
    </source>
</reference>
<reference key="2">
    <citation type="journal article" date="2003" name="J. Bacteriol.">
        <title>Comparative genomics of Salmonella enterica serovar Typhi strains Ty2 and CT18.</title>
        <authorList>
            <person name="Deng W."/>
            <person name="Liou S.-R."/>
            <person name="Plunkett G. III"/>
            <person name="Mayhew G.F."/>
            <person name="Rose D.J."/>
            <person name="Burland V."/>
            <person name="Kodoyianni V."/>
            <person name="Schwartz D.C."/>
            <person name="Blattner F.R."/>
        </authorList>
    </citation>
    <scope>NUCLEOTIDE SEQUENCE [LARGE SCALE GENOMIC DNA]</scope>
    <source>
        <strain>ATCC 700931 / Ty2</strain>
    </source>
</reference>
<accession>Q8XEW9</accession>
<accession>Q7AM91</accession>
<feature type="chain" id="PRO_0000080124" description="Bifunctional protein HldE">
    <location>
        <begin position="1"/>
        <end position="477"/>
    </location>
</feature>
<feature type="region of interest" description="Ribokinase">
    <location>
        <begin position="1"/>
        <end position="318"/>
    </location>
</feature>
<feature type="region of interest" description="Cytidylyltransferase">
    <location>
        <begin position="344"/>
        <end position="477"/>
    </location>
</feature>
<feature type="active site" evidence="1">
    <location>
        <position position="264"/>
    </location>
</feature>
<feature type="binding site" evidence="1">
    <location>
        <begin position="195"/>
        <end position="198"/>
    </location>
    <ligand>
        <name>ATP</name>
        <dbReference type="ChEBI" id="CHEBI:30616"/>
    </ligand>
</feature>
<evidence type="ECO:0000255" key="1">
    <source>
        <dbReference type="HAMAP-Rule" id="MF_01603"/>
    </source>
</evidence>
<sequence>MKVNLPAFERAGVMVVGDVMLDRYWYGPTCRISPEAPVPVVKVNTVEERPGGAANVAMNIASLGANARLVGLTGIDDAARALSKTLAEVNVKCDFVSVPTHPTITKLRVLSRNQQLIRLDFEEGFEGVDPQPLHERINQALGSIGALVLSDYAKGALTSVQTMISLARQAGVPVLIDPKGTDFERYRGATLLTPNLSEFEAVAGKCKSEDELVERGMKLIADYDLSALLVTRSEQGMTLLQPNKAPLHMPTQAQEVYDVTGAGDTVIGVLAATLAAGNTLEEACYFANAAAGVVVGKLGTSTVSPIELENAVRGRADTGFGVMTEEELRQAVASARKRGEKVVMTNGVFDILHAGHVSYLANARKLGDRLIVAVNSDASTKRLKGESRPVNPLEQRMIVLGALESVDWVVSFEEDTPQRLIAGILPDLLVKGGDYKPEEIAGSEEVWANGGEVMVLNFEDGCSTTNIIKKIQTESEK</sequence>
<organism>
    <name type="scientific">Salmonella typhi</name>
    <dbReference type="NCBI Taxonomy" id="90370"/>
    <lineage>
        <taxon>Bacteria</taxon>
        <taxon>Pseudomonadati</taxon>
        <taxon>Pseudomonadota</taxon>
        <taxon>Gammaproteobacteria</taxon>
        <taxon>Enterobacterales</taxon>
        <taxon>Enterobacteriaceae</taxon>
        <taxon>Salmonella</taxon>
    </lineage>
</organism>
<comment type="function">
    <text evidence="1">Catalyzes the phosphorylation of D-glycero-D-manno-heptose 7-phosphate at the C-1 position to selectively form D-glycero-beta-D-manno-heptose-1,7-bisphosphate.</text>
</comment>
<comment type="function">
    <text evidence="1">Catalyzes the ADP transfer from ATP to D-glycero-beta-D-manno-heptose 1-phosphate, yielding ADP-D-glycero-beta-D-manno-heptose.</text>
</comment>
<comment type="catalytic activity">
    <reaction evidence="1">
        <text>D-glycero-beta-D-manno-heptose 7-phosphate + ATP = D-glycero-beta-D-manno-heptose 1,7-bisphosphate + ADP + H(+)</text>
        <dbReference type="Rhea" id="RHEA:27473"/>
        <dbReference type="ChEBI" id="CHEBI:15378"/>
        <dbReference type="ChEBI" id="CHEBI:30616"/>
        <dbReference type="ChEBI" id="CHEBI:60204"/>
        <dbReference type="ChEBI" id="CHEBI:60208"/>
        <dbReference type="ChEBI" id="CHEBI:456216"/>
        <dbReference type="EC" id="2.7.1.167"/>
    </reaction>
</comment>
<comment type="catalytic activity">
    <reaction evidence="1">
        <text>D-glycero-beta-D-manno-heptose 1-phosphate + ATP + H(+) = ADP-D-glycero-beta-D-manno-heptose + diphosphate</text>
        <dbReference type="Rhea" id="RHEA:27465"/>
        <dbReference type="ChEBI" id="CHEBI:15378"/>
        <dbReference type="ChEBI" id="CHEBI:30616"/>
        <dbReference type="ChEBI" id="CHEBI:33019"/>
        <dbReference type="ChEBI" id="CHEBI:59967"/>
        <dbReference type="ChEBI" id="CHEBI:61593"/>
        <dbReference type="EC" id="2.7.7.70"/>
    </reaction>
</comment>
<comment type="pathway">
    <text evidence="1">Nucleotide-sugar biosynthesis; ADP-L-glycero-beta-D-manno-heptose biosynthesis; ADP-L-glycero-beta-D-manno-heptose from D-glycero-beta-D-manno-heptose 7-phosphate: step 1/4.</text>
</comment>
<comment type="pathway">
    <text evidence="1">Nucleotide-sugar biosynthesis; ADP-L-glycero-beta-D-manno-heptose biosynthesis; ADP-L-glycero-beta-D-manno-heptose from D-glycero-beta-D-manno-heptose 7-phosphate: step 3/4.</text>
</comment>
<comment type="pathway">
    <text>Bacterial outer membrane biogenesis; LPS core biosynthesis.</text>
</comment>
<comment type="subunit">
    <text evidence="1">Homodimer.</text>
</comment>
<comment type="similarity">
    <text evidence="1">In the N-terminal section; belongs to the carbohydrate kinase PfkB family.</text>
</comment>
<comment type="similarity">
    <text evidence="1">In the C-terminal section; belongs to the cytidylyltransferase family.</text>
</comment>